<keyword id="KW-0256">Endoplasmic reticulum</keyword>
<keyword id="KW-0328">Glycosyltransferase</keyword>
<keyword id="KW-0472">Membrane</keyword>
<keyword id="KW-1185">Reference proteome</keyword>
<keyword id="KW-0808">Transferase</keyword>
<keyword id="KW-0812">Transmembrane</keyword>
<keyword id="KW-1133">Transmembrane helix</keyword>
<sequence>MKGDRSRQNMAVTKKAKLKKNDEPKKVLKTAATEKGEGSKRYSLWNFWISTLFLKLLLIPDYFSTDFDVHRNWLAITNKLPISEWYYEHTSQWTLDYPPFFAYFEWFLSQFVPKSVRDDGCLDIVEIGKFGLPTIVFQRLTVIFSEILLFVILQIYINTTKLSERSQSFVVASSIVLSPGFLIIDHIHFQYNGFLFAILIGSIVAAKNKRYILCAVLYTTAICFKHIFLYLAPCYFVFLLRAYVLNVNNFKFKSYKDFLFLIRWANLLKLATVVVGIFTICFLPFAHQMPQVLSRLFPFSRGLTHAYWAPNFWALYSFMDKILTTVMLKLPYVHTFATKFIKPPLIPQNIKEINERLAANNNGSKGLVQDVFFVILPQIPPKLTFILTIFYQVLAVLPLLFDPSFKRFVGSLTLCGLASFLFGWHVHEKAIMLVIIPFTFLVGFDRRLLVPFMLVASAGYVSLYPLLYKGQDFFIKTLYTYVWCIIYFAAFRKTTKISSSVERRIFFLDRLALTYIFSLLPIVTVLQILDEVKWRYSFLQKFEFLGLMIYSVYCSLGIISSWFALSWLYNFDELLWQ</sequence>
<name>ALG8_YEAST</name>
<gene>
    <name type="primary">ALG8</name>
    <name type="ordered locus">YOR067C</name>
    <name type="ORF">YOR29-18</name>
</gene>
<comment type="function">
    <text evidence="3">Dolichyl pyrophosphate Glc1Man9GlcNAc2 alpha-1,3-glucosyltransferase that operates in the biosynthetic pathway of dolichol-linked oligosaccharides, the glycan precursors employed in protein asparagine (N)-glycosylation. The assembly of dolichol-linked oligosaccharides begins on the cytosolic side of the endoplasmic reticulum membrane and finishes in its lumen. The sequential addition of sugars to dolichol pyrophosphate produces dolichol-linked oligosaccharides containing fourteen sugars, including two GlcNAcs, nine mannoses and three glucoses. Once assembled, the oligosaccharide is transferred from the lipid to nascent proteins by oligosaccharyltransferases. In the lumen of the endoplasmic reticulum, adds the second glucose residue from dolichyl phosphate glucose (Dol-P-Glc) onto the lipid-linked oligosaccharide intermediate Glc(1)Man(9)GlcNAc(2)-PP-Dol to produce Glc(2)Man(9)GlcNAc(2)-PP-Dol. Glc(2)Man(9)GlcNAc(2)-PP-Dol is a substrate for ALG10, the following enzyme in the biosynthetic pathway.</text>
</comment>
<comment type="catalytic activity">
    <reaction evidence="3">
        <text>an alpha-D-Glc-(1-&gt;3)-alpha-D-Man-(1-&gt;2)-alpha-D-Man-(1-&gt;2)-alpha-D-Man-(1-&gt;3)-[alpha-D-Man-(1-&gt;2)-alpha-D-Man-(1-&gt;3)-[alpha-D-Man-(1-&gt;2)-alpha-D-Man-(1-&gt;6)]-alpha-D-Man-(1-&gt;6)]-beta-D-Man-(1-&gt;4)-beta-D-GlcNAc-(1-&gt;4)-alpha-D-GlcNAc-diphospho-di-trans,poly-cis-dolichol + a di-trans,poly-cis-dolichyl beta-D-glucosyl phosphate = an alpha-D-Glc-(1-&gt;3)-alpha-D-Glc-(1-&gt;3)-alpha-D-Man-(1-&gt;2)-alpha-D-Man-(1-&gt;2)-alpha-D-Man-(1-&gt;3)-[alpha-D-Man-(1-&gt;2)-alpha-D-Man-(1-&gt;3)-[alpha-D-Man-(1-&gt;2)-alpha-D-Man-(1-&gt;6)]-alpha-D-Man-(1-&gt;6)]-beta-D-Man-(1-&gt;4)-beta-D-GlcNAc-(1-&gt;4)-alpha-D-GlcNAc-diphospho-di-trans,poly-cis-dolichol + a di-trans,poly-cis-dolichyl phosphate + H(+)</text>
        <dbReference type="Rhea" id="RHEA:31307"/>
        <dbReference type="Rhea" id="RHEA-COMP:19498"/>
        <dbReference type="Rhea" id="RHEA-COMP:19502"/>
        <dbReference type="Rhea" id="RHEA-COMP:19521"/>
        <dbReference type="Rhea" id="RHEA-COMP:19522"/>
        <dbReference type="ChEBI" id="CHEBI:15378"/>
        <dbReference type="ChEBI" id="CHEBI:57525"/>
        <dbReference type="ChEBI" id="CHEBI:57683"/>
        <dbReference type="ChEBI" id="CHEBI:132521"/>
        <dbReference type="ChEBI" id="CHEBI:132522"/>
        <dbReference type="EC" id="2.4.1.265"/>
    </reaction>
    <physiologicalReaction direction="left-to-right" evidence="3">
        <dbReference type="Rhea" id="RHEA:31308"/>
    </physiologicalReaction>
</comment>
<comment type="pathway">
    <text evidence="3">Protein modification; protein glycosylation.</text>
</comment>
<comment type="subcellular location">
    <subcellularLocation>
        <location evidence="3">Endoplasmic reticulum membrane</location>
        <topology evidence="1">Multi-pass membrane protein</topology>
    </subcellularLocation>
</comment>
<comment type="similarity">
    <text evidence="4">Belongs to the ALG6/ALG8 glucosyltransferase family.</text>
</comment>
<organism>
    <name type="scientific">Saccharomyces cerevisiae (strain ATCC 204508 / S288c)</name>
    <name type="common">Baker's yeast</name>
    <dbReference type="NCBI Taxonomy" id="559292"/>
    <lineage>
        <taxon>Eukaryota</taxon>
        <taxon>Fungi</taxon>
        <taxon>Dikarya</taxon>
        <taxon>Ascomycota</taxon>
        <taxon>Saccharomycotina</taxon>
        <taxon>Saccharomycetes</taxon>
        <taxon>Saccharomycetales</taxon>
        <taxon>Saccharomycetaceae</taxon>
        <taxon>Saccharomyces</taxon>
    </lineage>
</organism>
<proteinExistence type="evidence at protein level"/>
<accession>P40351</accession>
<accession>D6W2D0</accession>
<reference key="1">
    <citation type="journal article" date="1994" name="Proc. Natl. Acad. Sci. U.S.A.">
        <title>New phenotype of mutations deficient in glucosylation of the lipid-linked oligosaccharide: cloning of the ALG8 locus.</title>
        <authorList>
            <person name="Stagjar I."/>
            <person name="Te Heesen S."/>
            <person name="Aebi M."/>
        </authorList>
    </citation>
    <scope>NUCLEOTIDE SEQUENCE [GENOMIC DNA]</scope>
</reference>
<reference key="2">
    <citation type="journal article" date="1997" name="Yeast">
        <title>The sequence of a 54.7 kb fragment of yeast chromosome XV reveals the presence of two tRNAs and 24 new open reading frames.</title>
        <authorList>
            <person name="Valens M."/>
            <person name="Bohn C."/>
            <person name="Daignan-Fornier B."/>
            <person name="Dang V.-D."/>
            <person name="Bolotin-Fukuhara M."/>
        </authorList>
    </citation>
    <scope>NUCLEOTIDE SEQUENCE [GENOMIC DNA]</scope>
</reference>
<reference key="3">
    <citation type="journal article" date="1997" name="Nature">
        <title>The nucleotide sequence of Saccharomyces cerevisiae chromosome XV.</title>
        <authorList>
            <person name="Dujon B."/>
            <person name="Albermann K."/>
            <person name="Aldea M."/>
            <person name="Alexandraki D."/>
            <person name="Ansorge W."/>
            <person name="Arino J."/>
            <person name="Benes V."/>
            <person name="Bohn C."/>
            <person name="Bolotin-Fukuhara M."/>
            <person name="Bordonne R."/>
            <person name="Boyer J."/>
            <person name="Camasses A."/>
            <person name="Casamayor A."/>
            <person name="Casas C."/>
            <person name="Cheret G."/>
            <person name="Cziepluch C."/>
            <person name="Daignan-Fornier B."/>
            <person name="Dang V.-D."/>
            <person name="de Haan M."/>
            <person name="Delius H."/>
            <person name="Durand P."/>
            <person name="Fairhead C."/>
            <person name="Feldmann H."/>
            <person name="Gaillon L."/>
            <person name="Galisson F."/>
            <person name="Gamo F.-J."/>
            <person name="Gancedo C."/>
            <person name="Goffeau A."/>
            <person name="Goulding S.E."/>
            <person name="Grivell L.A."/>
            <person name="Habbig B."/>
            <person name="Hand N.J."/>
            <person name="Hani J."/>
            <person name="Hattenhorst U."/>
            <person name="Hebling U."/>
            <person name="Hernando Y."/>
            <person name="Herrero E."/>
            <person name="Heumann K."/>
            <person name="Hiesel R."/>
            <person name="Hilger F."/>
            <person name="Hofmann B."/>
            <person name="Hollenberg C.P."/>
            <person name="Hughes B."/>
            <person name="Jauniaux J.-C."/>
            <person name="Kalogeropoulos A."/>
            <person name="Katsoulou C."/>
            <person name="Kordes E."/>
            <person name="Lafuente M.J."/>
            <person name="Landt O."/>
            <person name="Louis E.J."/>
            <person name="Maarse A.C."/>
            <person name="Madania A."/>
            <person name="Mannhaupt G."/>
            <person name="Marck C."/>
            <person name="Martin R.P."/>
            <person name="Mewes H.-W."/>
            <person name="Michaux G."/>
            <person name="Paces V."/>
            <person name="Parle-McDermott A.G."/>
            <person name="Pearson B.M."/>
            <person name="Perrin A."/>
            <person name="Pettersson B."/>
            <person name="Poch O."/>
            <person name="Pohl T.M."/>
            <person name="Poirey R."/>
            <person name="Portetelle D."/>
            <person name="Pujol A."/>
            <person name="Purnelle B."/>
            <person name="Ramezani Rad M."/>
            <person name="Rechmann S."/>
            <person name="Schwager C."/>
            <person name="Schweizer M."/>
            <person name="Sor F."/>
            <person name="Sterky F."/>
            <person name="Tarassov I.A."/>
            <person name="Teodoru C."/>
            <person name="Tettelin H."/>
            <person name="Thierry A."/>
            <person name="Tobiasch E."/>
            <person name="Tzermia M."/>
            <person name="Uhlen M."/>
            <person name="Unseld M."/>
            <person name="Valens M."/>
            <person name="Vandenbol M."/>
            <person name="Vetter I."/>
            <person name="Vlcek C."/>
            <person name="Voet M."/>
            <person name="Volckaert G."/>
            <person name="Voss H."/>
            <person name="Wambutt R."/>
            <person name="Wedler H."/>
            <person name="Wiemann S."/>
            <person name="Winsor B."/>
            <person name="Wolfe K.H."/>
            <person name="Zollner A."/>
            <person name="Zumstein E."/>
            <person name="Kleine K."/>
        </authorList>
    </citation>
    <scope>NUCLEOTIDE SEQUENCE [LARGE SCALE GENOMIC DNA]</scope>
    <source>
        <strain>ATCC 204508 / S288c</strain>
    </source>
</reference>
<reference key="4">
    <citation type="journal article" date="2014" name="G3 (Bethesda)">
        <title>The reference genome sequence of Saccharomyces cerevisiae: Then and now.</title>
        <authorList>
            <person name="Engel S.R."/>
            <person name="Dietrich F.S."/>
            <person name="Fisk D.G."/>
            <person name="Binkley G."/>
            <person name="Balakrishnan R."/>
            <person name="Costanzo M.C."/>
            <person name="Dwight S.S."/>
            <person name="Hitz B.C."/>
            <person name="Karra K."/>
            <person name="Nash R.S."/>
            <person name="Weng S."/>
            <person name="Wong E.D."/>
            <person name="Lloyd P."/>
            <person name="Skrzypek M.S."/>
            <person name="Miyasato S.R."/>
            <person name="Simison M."/>
            <person name="Cherry J.M."/>
        </authorList>
    </citation>
    <scope>GENOME REANNOTATION</scope>
    <source>
        <strain>ATCC 204508 / S288c</strain>
    </source>
</reference>
<reference key="5">
    <citation type="journal article" date="1986" name="J. Biol. Chem.">
        <title>A new yeast mutation in the glucosylation steps of the asparagine-linked glycosylation pathway. Formation of a novel asparagine-linked oligosaccharide containing two glucose residues.</title>
        <authorList>
            <person name="Runge K.W."/>
            <person name="Robbins P.W."/>
        </authorList>
    </citation>
    <scope>FUNCTION</scope>
    <scope>CATALYTIC ACTIVITY</scope>
    <scope>PATHWAY</scope>
    <scope>SUBCELLULAR LOCATION</scope>
</reference>
<reference key="6">
    <citation type="journal article" date="2006" name="Proc. Natl. Acad. Sci. U.S.A.">
        <title>A global topology map of the Saccharomyces cerevisiae membrane proteome.</title>
        <authorList>
            <person name="Kim H."/>
            <person name="Melen K."/>
            <person name="Oesterberg M."/>
            <person name="von Heijne G."/>
        </authorList>
    </citation>
    <scope>TOPOLOGY [LARGE SCALE ANALYSIS]</scope>
    <source>
        <strain>ATCC 208353 / W303-1A</strain>
    </source>
</reference>
<feature type="chain" id="PRO_0000174168" description="Dolichyl pyrophosphate Glc1Man9GlcNAc2 alpha-1,3-glucosyltransferase">
    <location>
        <begin position="1"/>
        <end position="577"/>
    </location>
</feature>
<feature type="topological domain" description="Lumenal" evidence="1">
    <location>
        <begin position="1"/>
        <end position="42"/>
    </location>
</feature>
<feature type="transmembrane region" description="Helical" evidence="1">
    <location>
        <begin position="43"/>
        <end position="63"/>
    </location>
</feature>
<feature type="topological domain" description="Cytoplasmic" evidence="1">
    <location>
        <begin position="64"/>
        <end position="92"/>
    </location>
</feature>
<feature type="transmembrane region" description="Helical" evidence="1">
    <location>
        <begin position="93"/>
        <end position="113"/>
    </location>
</feature>
<feature type="topological domain" description="Lumenal" evidence="1">
    <location>
        <begin position="114"/>
        <end position="139"/>
    </location>
</feature>
<feature type="transmembrane region" description="Helical" evidence="1">
    <location>
        <begin position="140"/>
        <end position="160"/>
    </location>
</feature>
<feature type="topological domain" description="Cytoplasmic" evidence="1">
    <location>
        <begin position="161"/>
        <end position="168"/>
    </location>
</feature>
<feature type="transmembrane region" description="Helical" evidence="1">
    <location>
        <begin position="169"/>
        <end position="189"/>
    </location>
</feature>
<feature type="topological domain" description="Lumenal" evidence="1">
    <location>
        <begin position="190"/>
        <end position="219"/>
    </location>
</feature>
<feature type="transmembrane region" description="Helical" evidence="1">
    <location>
        <begin position="220"/>
        <end position="240"/>
    </location>
</feature>
<feature type="topological domain" description="Cytoplasmic" evidence="1">
    <location>
        <begin position="241"/>
        <end position="266"/>
    </location>
</feature>
<feature type="transmembrane region" description="Helical" evidence="1">
    <location>
        <begin position="267"/>
        <end position="287"/>
    </location>
</feature>
<feature type="topological domain" description="Lumenal" evidence="1">
    <location>
        <begin position="288"/>
        <end position="307"/>
    </location>
</feature>
<feature type="transmembrane region" description="Helical" evidence="1">
    <location>
        <begin position="308"/>
        <end position="328"/>
    </location>
</feature>
<feature type="topological domain" description="Cytoplasmic" evidence="1">
    <location>
        <begin position="329"/>
        <end position="382"/>
    </location>
</feature>
<feature type="transmembrane region" description="Helical" evidence="1">
    <location>
        <begin position="383"/>
        <end position="403"/>
    </location>
</feature>
<feature type="topological domain" description="Lumenal" evidence="1">
    <location>
        <begin position="404"/>
        <end position="419"/>
    </location>
</feature>
<feature type="transmembrane region" description="Helical" evidence="1">
    <location>
        <begin position="420"/>
        <end position="440"/>
    </location>
</feature>
<feature type="topological domain" description="Cytoplasmic" evidence="1">
    <location>
        <begin position="441"/>
        <end position="447"/>
    </location>
</feature>
<feature type="transmembrane region" description="Helical" evidence="1">
    <location>
        <begin position="448"/>
        <end position="468"/>
    </location>
</feature>
<feature type="topological domain" description="Lumenal" evidence="1">
    <location>
        <begin position="469"/>
        <end position="470"/>
    </location>
</feature>
<feature type="transmembrane region" description="Helical" evidence="1">
    <location>
        <begin position="471"/>
        <end position="491"/>
    </location>
</feature>
<feature type="topological domain" description="Cytoplasmic" evidence="1">
    <location>
        <begin position="492"/>
        <end position="504"/>
    </location>
</feature>
<feature type="transmembrane region" description="Helical" evidence="1">
    <location>
        <begin position="505"/>
        <end position="525"/>
    </location>
</feature>
<feature type="topological domain" description="Lumenal" evidence="1">
    <location>
        <begin position="526"/>
        <end position="543"/>
    </location>
</feature>
<feature type="transmembrane region" description="Helical" evidence="1">
    <location>
        <begin position="544"/>
        <end position="564"/>
    </location>
</feature>
<feature type="topological domain" description="Cytoplasmic" evidence="1">
    <location>
        <begin position="565"/>
        <end position="577"/>
    </location>
</feature>
<feature type="region of interest" description="Disordered" evidence="2">
    <location>
        <begin position="1"/>
        <end position="24"/>
    </location>
</feature>
<dbReference type="EC" id="2.4.1.265" evidence="3"/>
<dbReference type="EMBL" id="X75929">
    <property type="protein sequence ID" value="CAA53533.1"/>
    <property type="molecule type" value="Genomic_DNA"/>
</dbReference>
<dbReference type="EMBL" id="Z74975">
    <property type="protein sequence ID" value="CAA99260.1"/>
    <property type="molecule type" value="Genomic_DNA"/>
</dbReference>
<dbReference type="EMBL" id="Z70678">
    <property type="protein sequence ID" value="CAA94552.1"/>
    <property type="molecule type" value="Genomic_DNA"/>
</dbReference>
<dbReference type="EMBL" id="BK006948">
    <property type="protein sequence ID" value="DAA10846.1"/>
    <property type="molecule type" value="Genomic_DNA"/>
</dbReference>
<dbReference type="PIR" id="S47961">
    <property type="entry name" value="S47961"/>
</dbReference>
<dbReference type="RefSeq" id="NP_014710.1">
    <property type="nucleotide sequence ID" value="NM_001183486.1"/>
</dbReference>
<dbReference type="SMR" id="P40351"/>
<dbReference type="BioGRID" id="34466">
    <property type="interactions" value="238"/>
</dbReference>
<dbReference type="DIP" id="DIP-7542N"/>
<dbReference type="FunCoup" id="P40351">
    <property type="interactions" value="919"/>
</dbReference>
<dbReference type="MINT" id="P40351"/>
<dbReference type="STRING" id="4932.YOR067C"/>
<dbReference type="CAZy" id="GT57">
    <property type="family name" value="Glycosyltransferase Family 57"/>
</dbReference>
<dbReference type="iPTMnet" id="P40351"/>
<dbReference type="PaxDb" id="4932-YOR067C"/>
<dbReference type="PeptideAtlas" id="P40351"/>
<dbReference type="EnsemblFungi" id="YOR067C_mRNA">
    <property type="protein sequence ID" value="YOR067C"/>
    <property type="gene ID" value="YOR067C"/>
</dbReference>
<dbReference type="GeneID" id="854233"/>
<dbReference type="KEGG" id="sce:YOR067C"/>
<dbReference type="AGR" id="SGD:S000005593"/>
<dbReference type="SGD" id="S000005593">
    <property type="gene designation" value="ALG8"/>
</dbReference>
<dbReference type="VEuPathDB" id="FungiDB:YOR067C"/>
<dbReference type="eggNOG" id="KOG2576">
    <property type="taxonomic scope" value="Eukaryota"/>
</dbReference>
<dbReference type="GeneTree" id="ENSGT00940000153733"/>
<dbReference type="HOGENOM" id="CLU_022045_1_1_1"/>
<dbReference type="InParanoid" id="P40351"/>
<dbReference type="OMA" id="YHSTDFD"/>
<dbReference type="OrthoDB" id="1689333at2759"/>
<dbReference type="BioCyc" id="MetaCyc:YOR067C-MONOMER"/>
<dbReference type="BioCyc" id="YEAST:YOR067C-MONOMER"/>
<dbReference type="BRENDA" id="2.4.1.265">
    <property type="organism ID" value="984"/>
</dbReference>
<dbReference type="Reactome" id="R-SCE-446193">
    <property type="pathway name" value="Biosynthesis of the N-glycan precursor (dolichol lipid-linked oligosaccharide, LLO) and transfer to a nascent protein"/>
</dbReference>
<dbReference type="UniPathway" id="UPA00378"/>
<dbReference type="BioGRID-ORCS" id="854233">
    <property type="hits" value="0 hits in 10 CRISPR screens"/>
</dbReference>
<dbReference type="PRO" id="PR:P40351"/>
<dbReference type="Proteomes" id="UP000002311">
    <property type="component" value="Chromosome XV"/>
</dbReference>
<dbReference type="RNAct" id="P40351">
    <property type="molecule type" value="protein"/>
</dbReference>
<dbReference type="GO" id="GO:0005783">
    <property type="term" value="C:endoplasmic reticulum"/>
    <property type="evidence" value="ECO:0007005"/>
    <property type="project" value="SGD"/>
</dbReference>
<dbReference type="GO" id="GO:0005789">
    <property type="term" value="C:endoplasmic reticulum membrane"/>
    <property type="evidence" value="ECO:0000314"/>
    <property type="project" value="UniProtKB"/>
</dbReference>
<dbReference type="GO" id="GO:0042283">
    <property type="term" value="F:dolichyl pyrophosphate Glc1Man9GlcNAc2 alpha-1,3-glucosyltransferase activity"/>
    <property type="evidence" value="ECO:0000315"/>
    <property type="project" value="SGD"/>
</dbReference>
<dbReference type="GO" id="GO:0006488">
    <property type="term" value="P:dolichol-linked oligosaccharide biosynthetic process"/>
    <property type="evidence" value="ECO:0000315"/>
    <property type="project" value="UniProtKB"/>
</dbReference>
<dbReference type="GO" id="GO:0006487">
    <property type="term" value="P:protein N-linked glycosylation"/>
    <property type="evidence" value="ECO:0000315"/>
    <property type="project" value="UniProtKB"/>
</dbReference>
<dbReference type="InterPro" id="IPR004856">
    <property type="entry name" value="Glyco_trans_ALG6/ALG8"/>
</dbReference>
<dbReference type="PANTHER" id="PTHR12413">
    <property type="entry name" value="DOLICHYL GLYCOSYLTRANSFERASE"/>
    <property type="match status" value="1"/>
</dbReference>
<dbReference type="PANTHER" id="PTHR12413:SF2">
    <property type="entry name" value="DOLICHYL PYROPHOSPHATE GLC1MAN9GLCNAC2 ALPHA-1,3-GLUCOSYLTRANSFERASE-RELATED"/>
    <property type="match status" value="1"/>
</dbReference>
<dbReference type="Pfam" id="PF03155">
    <property type="entry name" value="Alg6_Alg8"/>
    <property type="match status" value="1"/>
</dbReference>
<evidence type="ECO:0000255" key="1"/>
<evidence type="ECO:0000256" key="2">
    <source>
        <dbReference type="SAM" id="MobiDB-lite"/>
    </source>
</evidence>
<evidence type="ECO:0000269" key="3">
    <source>
    </source>
</evidence>
<evidence type="ECO:0000305" key="4"/>
<evidence type="ECO:0000305" key="5">
    <source>
    </source>
</evidence>
<protein>
    <recommendedName>
        <fullName evidence="5">Dolichyl pyrophosphate Glc1Man9GlcNAc2 alpha-1,3-glucosyltransferase</fullName>
        <ecNumber evidence="3">2.4.1.265</ecNumber>
    </recommendedName>
    <alternativeName>
        <fullName>Asparagine-linked glycosylation protein 8</fullName>
    </alternativeName>
    <alternativeName>
        <fullName>Dolichyl-P-Glc:Glc1Man9GlcNAc2-PP-dolichyl alpha-1,3-glucosyltransferase</fullName>
    </alternativeName>
    <alternativeName>
        <fullName>Dolichyl-P-Glc:Glc1Man9GlcNAc2-PP-dolichyl glucosyltransferase</fullName>
    </alternativeName>
</protein>